<reference key="1">
    <citation type="submission" date="1995-10" db="EMBL/GenBank/DDBJ databases">
        <authorList>
            <person name="Clough K.A."/>
            <person name="Brindley P.J."/>
        </authorList>
    </citation>
    <scope>NUCLEOTIDE SEQUENCE [MRNA]</scope>
    <source>
        <strain>Chinese</strain>
    </source>
</reference>
<feature type="chain" id="PRO_0000073728" description="Sorcin">
    <location>
        <begin position="1"/>
        <end position="171"/>
    </location>
</feature>
<feature type="domain" description="EF-hand 1" evidence="2">
    <location>
        <begin position="3"/>
        <end position="38"/>
    </location>
</feature>
<feature type="domain" description="EF-hand 2" evidence="2">
    <location>
        <begin position="40"/>
        <end position="69"/>
    </location>
</feature>
<feature type="domain" description="EF-hand 3" evidence="2">
    <location>
        <begin position="70"/>
        <end position="105"/>
    </location>
</feature>
<feature type="domain" description="EF-hand 4" evidence="2">
    <location>
        <begin position="106"/>
        <end position="140"/>
    </location>
</feature>
<feature type="binding site" evidence="2">
    <location>
        <position position="16"/>
    </location>
    <ligand>
        <name>Ca(2+)</name>
        <dbReference type="ChEBI" id="CHEBI:29108"/>
        <label>1</label>
    </ligand>
</feature>
<feature type="binding site" evidence="2">
    <location>
        <position position="18"/>
    </location>
    <ligand>
        <name>Ca(2+)</name>
        <dbReference type="ChEBI" id="CHEBI:29108"/>
        <label>1</label>
    </ligand>
</feature>
<feature type="binding site" evidence="2">
    <location>
        <position position="20"/>
    </location>
    <ligand>
        <name>Ca(2+)</name>
        <dbReference type="ChEBI" id="CHEBI:29108"/>
        <label>1</label>
    </ligand>
</feature>
<feature type="binding site" evidence="2">
    <location>
        <position position="22"/>
    </location>
    <ligand>
        <name>Ca(2+)</name>
        <dbReference type="ChEBI" id="CHEBI:29108"/>
        <label>1</label>
    </ligand>
</feature>
<feature type="binding site" evidence="2">
    <location>
        <position position="27"/>
    </location>
    <ligand>
        <name>Ca(2+)</name>
        <dbReference type="ChEBI" id="CHEBI:29108"/>
        <label>1</label>
    </ligand>
</feature>
<feature type="binding site" evidence="2">
    <location>
        <position position="53"/>
    </location>
    <ligand>
        <name>Ca(2+)</name>
        <dbReference type="ChEBI" id="CHEBI:29108"/>
        <label>2</label>
    </ligand>
</feature>
<feature type="binding site" evidence="2">
    <location>
        <position position="55"/>
    </location>
    <ligand>
        <name>Ca(2+)</name>
        <dbReference type="ChEBI" id="CHEBI:29108"/>
        <label>2</label>
    </ligand>
</feature>
<feature type="binding site" evidence="2">
    <location>
        <position position="57"/>
    </location>
    <ligand>
        <name>Ca(2+)</name>
        <dbReference type="ChEBI" id="CHEBI:29108"/>
        <label>2</label>
    </ligand>
</feature>
<feature type="binding site" evidence="2">
    <location>
        <position position="59"/>
    </location>
    <ligand>
        <name>Ca(2+)</name>
        <dbReference type="ChEBI" id="CHEBI:29108"/>
        <label>2</label>
    </ligand>
</feature>
<feature type="binding site" evidence="2">
    <location>
        <position position="64"/>
    </location>
    <ligand>
        <name>Ca(2+)</name>
        <dbReference type="ChEBI" id="CHEBI:29108"/>
        <label>2</label>
    </ligand>
</feature>
<feature type="binding site" evidence="2">
    <location>
        <position position="83"/>
    </location>
    <ligand>
        <name>Ca(2+)</name>
        <dbReference type="ChEBI" id="CHEBI:29108"/>
        <label>3</label>
    </ligand>
</feature>
<feature type="binding site" evidence="2">
    <location>
        <position position="85"/>
    </location>
    <ligand>
        <name>Ca(2+)</name>
        <dbReference type="ChEBI" id="CHEBI:29108"/>
        <label>3</label>
    </ligand>
</feature>
<feature type="binding site" evidence="2">
    <location>
        <position position="87"/>
    </location>
    <ligand>
        <name>Ca(2+)</name>
        <dbReference type="ChEBI" id="CHEBI:29108"/>
        <label>3</label>
    </ligand>
</feature>
<feature type="binding site" evidence="2">
    <location>
        <position position="89"/>
    </location>
    <ligand>
        <name>Ca(2+)</name>
        <dbReference type="ChEBI" id="CHEBI:29108"/>
        <label>3</label>
    </ligand>
</feature>
<feature type="binding site" evidence="2">
    <location>
        <position position="94"/>
    </location>
    <ligand>
        <name>Ca(2+)</name>
        <dbReference type="ChEBI" id="CHEBI:29108"/>
        <label>3</label>
    </ligand>
</feature>
<proteinExistence type="evidence at transcript level"/>
<dbReference type="EMBL" id="U39069">
    <property type="protein sequence ID" value="AAB17908.1"/>
    <property type="molecule type" value="mRNA"/>
</dbReference>
<dbReference type="SMR" id="Q94743"/>
<dbReference type="GO" id="GO:0005737">
    <property type="term" value="C:cytoplasm"/>
    <property type="evidence" value="ECO:0007669"/>
    <property type="project" value="UniProtKB-SubCell"/>
</dbReference>
<dbReference type="GO" id="GO:0005509">
    <property type="term" value="F:calcium ion binding"/>
    <property type="evidence" value="ECO:0007669"/>
    <property type="project" value="InterPro"/>
</dbReference>
<dbReference type="GO" id="GO:0048306">
    <property type="term" value="F:calcium-dependent protein binding"/>
    <property type="evidence" value="ECO:0007669"/>
    <property type="project" value="UniProtKB-ARBA"/>
</dbReference>
<dbReference type="CDD" id="cd16180">
    <property type="entry name" value="EFh_PEF_Group_I"/>
    <property type="match status" value="1"/>
</dbReference>
<dbReference type="Gene3D" id="1.10.238.10">
    <property type="entry name" value="EF-hand"/>
    <property type="match status" value="1"/>
</dbReference>
<dbReference type="InterPro" id="IPR011992">
    <property type="entry name" value="EF-hand-dom_pair"/>
</dbReference>
<dbReference type="InterPro" id="IPR018247">
    <property type="entry name" value="EF_Hand_1_Ca_BS"/>
</dbReference>
<dbReference type="InterPro" id="IPR002048">
    <property type="entry name" value="EF_hand_dom"/>
</dbReference>
<dbReference type="InterPro" id="IPR051426">
    <property type="entry name" value="Peflin/Sorcin_CaBP"/>
</dbReference>
<dbReference type="PANTHER" id="PTHR46212">
    <property type="entry name" value="PEFLIN"/>
    <property type="match status" value="1"/>
</dbReference>
<dbReference type="PANTHER" id="PTHR46212:SF9">
    <property type="entry name" value="PROGRAMMED CELL DEATH PROTEIN 6"/>
    <property type="match status" value="1"/>
</dbReference>
<dbReference type="Pfam" id="PF13499">
    <property type="entry name" value="EF-hand_7"/>
    <property type="match status" value="2"/>
</dbReference>
<dbReference type="SMART" id="SM00054">
    <property type="entry name" value="EFh"/>
    <property type="match status" value="4"/>
</dbReference>
<dbReference type="SUPFAM" id="SSF47473">
    <property type="entry name" value="EF-hand"/>
    <property type="match status" value="1"/>
</dbReference>
<dbReference type="PROSITE" id="PS00018">
    <property type="entry name" value="EF_HAND_1"/>
    <property type="match status" value="3"/>
</dbReference>
<dbReference type="PROSITE" id="PS50222">
    <property type="entry name" value="EF_HAND_2"/>
    <property type="match status" value="4"/>
</dbReference>
<accession>Q94743</accession>
<sequence>MVMDTNSLRHIFSRVDADKSGSISANELQTSLSNGLGTPLNIRTVQLMVAMFDRDMNGTINFNEFLGLFKYVQDWQTCFRRYDRDNSGSIDLNEFSNALISFGYHLSPQFVNLMMRRFDRNRGSIAFDDFIYACVCLQTLTREFSRYDCRGIGHTVFSFEQFLTSAFAVII</sequence>
<comment type="function">
    <text evidence="1">Calcium-binding protein.</text>
</comment>
<comment type="subcellular location">
    <subcellularLocation>
        <location evidence="3">Cytoplasm</location>
    </subcellularLocation>
</comment>
<evidence type="ECO:0000250" key="1"/>
<evidence type="ECO:0000255" key="2">
    <source>
        <dbReference type="PROSITE-ProRule" id="PRU00448"/>
    </source>
</evidence>
<evidence type="ECO:0000305" key="3"/>
<keyword id="KW-0106">Calcium</keyword>
<keyword id="KW-0963">Cytoplasm</keyword>
<keyword id="KW-0479">Metal-binding</keyword>
<keyword id="KW-0677">Repeat</keyword>
<protein>
    <recommendedName>
        <fullName>Sorcin</fullName>
    </recommendedName>
</protein>
<name>SORCN_SCHJA</name>
<organism>
    <name type="scientific">Schistosoma japonicum</name>
    <name type="common">Blood fluke</name>
    <dbReference type="NCBI Taxonomy" id="6182"/>
    <lineage>
        <taxon>Eukaryota</taxon>
        <taxon>Metazoa</taxon>
        <taxon>Spiralia</taxon>
        <taxon>Lophotrochozoa</taxon>
        <taxon>Platyhelminthes</taxon>
        <taxon>Trematoda</taxon>
        <taxon>Digenea</taxon>
        <taxon>Strigeidida</taxon>
        <taxon>Schistosomatoidea</taxon>
        <taxon>Schistosomatidae</taxon>
        <taxon>Schistosoma</taxon>
    </lineage>
</organism>